<name>THIG_YERP3</name>
<comment type="function">
    <text evidence="1">Catalyzes the rearrangement of 1-deoxy-D-xylulose 5-phosphate (DXP) to produce the thiazole phosphate moiety of thiamine. Sulfur is provided by the thiocarboxylate moiety of the carrier protein ThiS. In vitro, sulfur can be provided by H(2)S.</text>
</comment>
<comment type="catalytic activity">
    <reaction evidence="1">
        <text>[ThiS sulfur-carrier protein]-C-terminal-Gly-aminoethanethioate + 2-iminoacetate + 1-deoxy-D-xylulose 5-phosphate = [ThiS sulfur-carrier protein]-C-terminal Gly-Gly + 2-[(2R,5Z)-2-carboxy-4-methylthiazol-5(2H)-ylidene]ethyl phosphate + 2 H2O + H(+)</text>
        <dbReference type="Rhea" id="RHEA:26297"/>
        <dbReference type="Rhea" id="RHEA-COMP:12909"/>
        <dbReference type="Rhea" id="RHEA-COMP:19908"/>
        <dbReference type="ChEBI" id="CHEBI:15377"/>
        <dbReference type="ChEBI" id="CHEBI:15378"/>
        <dbReference type="ChEBI" id="CHEBI:57792"/>
        <dbReference type="ChEBI" id="CHEBI:62899"/>
        <dbReference type="ChEBI" id="CHEBI:77846"/>
        <dbReference type="ChEBI" id="CHEBI:90778"/>
        <dbReference type="ChEBI" id="CHEBI:232372"/>
        <dbReference type="EC" id="2.8.1.10"/>
    </reaction>
</comment>
<comment type="pathway">
    <text evidence="1">Cofactor biosynthesis; thiamine diphosphate biosynthesis.</text>
</comment>
<comment type="subunit">
    <text evidence="1">Homotetramer. Forms heterodimers with either ThiH or ThiS.</text>
</comment>
<comment type="subcellular location">
    <subcellularLocation>
        <location evidence="1">Cytoplasm</location>
    </subcellularLocation>
</comment>
<comment type="similarity">
    <text evidence="1">Belongs to the ThiG family.</text>
</comment>
<reference key="1">
    <citation type="journal article" date="2007" name="PLoS Genet.">
        <title>The complete genome sequence of Yersinia pseudotuberculosis IP31758, the causative agent of Far East scarlet-like fever.</title>
        <authorList>
            <person name="Eppinger M."/>
            <person name="Rosovitz M.J."/>
            <person name="Fricke W.F."/>
            <person name="Rasko D.A."/>
            <person name="Kokorina G."/>
            <person name="Fayolle C."/>
            <person name="Lindler L.E."/>
            <person name="Carniel E."/>
            <person name="Ravel J."/>
        </authorList>
    </citation>
    <scope>NUCLEOTIDE SEQUENCE [LARGE SCALE GENOMIC DNA]</scope>
    <source>
        <strain>IP 31758</strain>
    </source>
</reference>
<keyword id="KW-0963">Cytoplasm</keyword>
<keyword id="KW-0704">Schiff base</keyword>
<keyword id="KW-0784">Thiamine biosynthesis</keyword>
<keyword id="KW-0808">Transferase</keyword>
<evidence type="ECO:0000255" key="1">
    <source>
        <dbReference type="HAMAP-Rule" id="MF_00443"/>
    </source>
</evidence>
<sequence>MLKIADTTFTSRLFTGTGKFSSPELMLEALRASGSQLITMAMKRVDLQSGNDAILAPLRQLGVRLLPNTSGAKTAEEAIFAARLAREALNTHWVKLEIHPDVRYLLPDPIETLKAAEVLVKEGFVVLPYCGADPVLCKRLEEVGCAAVMPLGSPIGSNLGLRTRDFLQIIIEQSKVPVVVDAGIGAPSHALEALELGADAVLVNTAIAVAHSPVQMAHAFRLAVESGERARLAGLGASPFNPSQPDTLQLRATATSPLTGFLSQLEEQDHV</sequence>
<protein>
    <recommendedName>
        <fullName evidence="1">Thiazole synthase</fullName>
        <ecNumber evidence="1">2.8.1.10</ecNumber>
    </recommendedName>
</protein>
<organism>
    <name type="scientific">Yersinia pseudotuberculosis serotype O:1b (strain IP 31758)</name>
    <dbReference type="NCBI Taxonomy" id="349747"/>
    <lineage>
        <taxon>Bacteria</taxon>
        <taxon>Pseudomonadati</taxon>
        <taxon>Pseudomonadota</taxon>
        <taxon>Gammaproteobacteria</taxon>
        <taxon>Enterobacterales</taxon>
        <taxon>Yersiniaceae</taxon>
        <taxon>Yersinia</taxon>
    </lineage>
</organism>
<accession>A7FNH9</accession>
<gene>
    <name evidence="1" type="primary">thiG</name>
    <name type="ordered locus">YpsIP31758_3856</name>
</gene>
<feature type="chain" id="PRO_1000060254" description="Thiazole synthase">
    <location>
        <begin position="1"/>
        <end position="271"/>
    </location>
</feature>
<feature type="active site" description="Schiff-base intermediate with DXP" evidence="1">
    <location>
        <position position="95"/>
    </location>
</feature>
<feature type="binding site" evidence="1">
    <location>
        <position position="156"/>
    </location>
    <ligand>
        <name>1-deoxy-D-xylulose 5-phosphate</name>
        <dbReference type="ChEBI" id="CHEBI:57792"/>
    </ligand>
</feature>
<feature type="binding site" evidence="1">
    <location>
        <begin position="182"/>
        <end position="183"/>
    </location>
    <ligand>
        <name>1-deoxy-D-xylulose 5-phosphate</name>
        <dbReference type="ChEBI" id="CHEBI:57792"/>
    </ligand>
</feature>
<feature type="binding site" evidence="1">
    <location>
        <begin position="204"/>
        <end position="205"/>
    </location>
    <ligand>
        <name>1-deoxy-D-xylulose 5-phosphate</name>
        <dbReference type="ChEBI" id="CHEBI:57792"/>
    </ligand>
</feature>
<proteinExistence type="inferred from homology"/>
<dbReference type="EC" id="2.8.1.10" evidence="1"/>
<dbReference type="EMBL" id="CP000720">
    <property type="protein sequence ID" value="ABS47737.1"/>
    <property type="molecule type" value="Genomic_DNA"/>
</dbReference>
<dbReference type="RefSeq" id="WP_002228257.1">
    <property type="nucleotide sequence ID" value="NC_009708.1"/>
</dbReference>
<dbReference type="SMR" id="A7FNH9"/>
<dbReference type="KEGG" id="ypi:YpsIP31758_3856"/>
<dbReference type="HOGENOM" id="CLU_062233_0_0_6"/>
<dbReference type="UniPathway" id="UPA00060"/>
<dbReference type="Proteomes" id="UP000002412">
    <property type="component" value="Chromosome"/>
</dbReference>
<dbReference type="GO" id="GO:0005737">
    <property type="term" value="C:cytoplasm"/>
    <property type="evidence" value="ECO:0007669"/>
    <property type="project" value="UniProtKB-SubCell"/>
</dbReference>
<dbReference type="GO" id="GO:1990107">
    <property type="term" value="F:thiazole synthase activity"/>
    <property type="evidence" value="ECO:0007669"/>
    <property type="project" value="UniProtKB-EC"/>
</dbReference>
<dbReference type="GO" id="GO:0009229">
    <property type="term" value="P:thiamine diphosphate biosynthetic process"/>
    <property type="evidence" value="ECO:0007669"/>
    <property type="project" value="UniProtKB-UniRule"/>
</dbReference>
<dbReference type="CDD" id="cd04728">
    <property type="entry name" value="ThiG"/>
    <property type="match status" value="1"/>
</dbReference>
<dbReference type="FunFam" id="3.20.20.70:FF:000049">
    <property type="entry name" value="Thiazole synthase"/>
    <property type="match status" value="1"/>
</dbReference>
<dbReference type="Gene3D" id="3.20.20.70">
    <property type="entry name" value="Aldolase class I"/>
    <property type="match status" value="1"/>
</dbReference>
<dbReference type="HAMAP" id="MF_00443">
    <property type="entry name" value="ThiG"/>
    <property type="match status" value="1"/>
</dbReference>
<dbReference type="InterPro" id="IPR013785">
    <property type="entry name" value="Aldolase_TIM"/>
</dbReference>
<dbReference type="InterPro" id="IPR033983">
    <property type="entry name" value="Thiazole_synthase_ThiG"/>
</dbReference>
<dbReference type="InterPro" id="IPR008867">
    <property type="entry name" value="ThiG"/>
</dbReference>
<dbReference type="PANTHER" id="PTHR34266">
    <property type="entry name" value="THIAZOLE SYNTHASE"/>
    <property type="match status" value="1"/>
</dbReference>
<dbReference type="PANTHER" id="PTHR34266:SF2">
    <property type="entry name" value="THIAZOLE SYNTHASE"/>
    <property type="match status" value="1"/>
</dbReference>
<dbReference type="Pfam" id="PF05690">
    <property type="entry name" value="ThiG"/>
    <property type="match status" value="1"/>
</dbReference>
<dbReference type="SUPFAM" id="SSF110399">
    <property type="entry name" value="ThiG-like"/>
    <property type="match status" value="1"/>
</dbReference>